<feature type="chain" id="PRO_1000003138" description="Ribosome-recycling factor">
    <location>
        <begin position="1"/>
        <end position="179"/>
    </location>
</feature>
<gene>
    <name evidence="1" type="primary">frr</name>
    <name type="ordered locus">CTA_0737</name>
</gene>
<proteinExistence type="inferred from homology"/>
<protein>
    <recommendedName>
        <fullName evidence="1">Ribosome-recycling factor</fullName>
        <shortName evidence="1">RRF</shortName>
    </recommendedName>
    <alternativeName>
        <fullName evidence="1">Ribosome-releasing factor</fullName>
    </alternativeName>
</protein>
<organism>
    <name type="scientific">Chlamydia trachomatis serovar A (strain ATCC VR-571B / DSM 19440 / HAR-13)</name>
    <dbReference type="NCBI Taxonomy" id="315277"/>
    <lineage>
        <taxon>Bacteria</taxon>
        <taxon>Pseudomonadati</taxon>
        <taxon>Chlamydiota</taxon>
        <taxon>Chlamydiia</taxon>
        <taxon>Chlamydiales</taxon>
        <taxon>Chlamydiaceae</taxon>
        <taxon>Chlamydia/Chlamydophila group</taxon>
        <taxon>Chlamydia</taxon>
    </lineage>
</organism>
<keyword id="KW-0963">Cytoplasm</keyword>
<keyword id="KW-0648">Protein biosynthesis</keyword>
<reference key="1">
    <citation type="journal article" date="2005" name="Infect. Immun.">
        <title>Comparative genomic analysis of Chlamydia trachomatis oculotropic and genitotropic strains.</title>
        <authorList>
            <person name="Carlson J.H."/>
            <person name="Porcella S.F."/>
            <person name="McClarty G."/>
            <person name="Caldwell H.D."/>
        </authorList>
    </citation>
    <scope>NUCLEOTIDE SEQUENCE [LARGE SCALE GENOMIC DNA]</scope>
    <source>
        <strain>ATCC VR-571B / DSM 19440 / HAR-13</strain>
    </source>
</reference>
<accession>Q3KL17</accession>
<sequence>MTLASAEKEMAGVLTFFQKETRGFKTGKAHPALVETVTIEVYGTTMRLSDIASISVSDMRQLLISPYDAGTVSAISKGILAANLNLQPIVEGATVRINVPEPTEEYRREVIKQLKRKSEEAKVAIRNIRRTFNDRLKKDDSLTEDAVKSLEKKIQELTDKFCKQIEELAKQKEAELATV</sequence>
<dbReference type="EMBL" id="CP000051">
    <property type="protein sequence ID" value="AAX50955.1"/>
    <property type="molecule type" value="Genomic_DNA"/>
</dbReference>
<dbReference type="RefSeq" id="WP_011324819.1">
    <property type="nucleotide sequence ID" value="NC_007429.1"/>
</dbReference>
<dbReference type="SMR" id="Q3KL17"/>
<dbReference type="KEGG" id="cta:CTA_0737"/>
<dbReference type="HOGENOM" id="CLU_073981_2_1_0"/>
<dbReference type="Proteomes" id="UP000002532">
    <property type="component" value="Chromosome"/>
</dbReference>
<dbReference type="GO" id="GO:0005737">
    <property type="term" value="C:cytoplasm"/>
    <property type="evidence" value="ECO:0007669"/>
    <property type="project" value="UniProtKB-SubCell"/>
</dbReference>
<dbReference type="GO" id="GO:0043023">
    <property type="term" value="F:ribosomal large subunit binding"/>
    <property type="evidence" value="ECO:0007669"/>
    <property type="project" value="TreeGrafter"/>
</dbReference>
<dbReference type="GO" id="GO:0006415">
    <property type="term" value="P:translational termination"/>
    <property type="evidence" value="ECO:0007669"/>
    <property type="project" value="UniProtKB-UniRule"/>
</dbReference>
<dbReference type="CDD" id="cd00520">
    <property type="entry name" value="RRF"/>
    <property type="match status" value="1"/>
</dbReference>
<dbReference type="FunFam" id="1.10.132.20:FF:000001">
    <property type="entry name" value="Ribosome-recycling factor"/>
    <property type="match status" value="1"/>
</dbReference>
<dbReference type="FunFam" id="3.30.1360.40:FF:000001">
    <property type="entry name" value="Ribosome-recycling factor"/>
    <property type="match status" value="1"/>
</dbReference>
<dbReference type="Gene3D" id="3.30.1360.40">
    <property type="match status" value="1"/>
</dbReference>
<dbReference type="Gene3D" id="1.10.132.20">
    <property type="entry name" value="Ribosome-recycling factor"/>
    <property type="match status" value="1"/>
</dbReference>
<dbReference type="HAMAP" id="MF_00040">
    <property type="entry name" value="RRF"/>
    <property type="match status" value="1"/>
</dbReference>
<dbReference type="InterPro" id="IPR002661">
    <property type="entry name" value="Ribosome_recyc_fac"/>
</dbReference>
<dbReference type="InterPro" id="IPR023584">
    <property type="entry name" value="Ribosome_recyc_fac_dom"/>
</dbReference>
<dbReference type="InterPro" id="IPR036191">
    <property type="entry name" value="RRF_sf"/>
</dbReference>
<dbReference type="NCBIfam" id="TIGR00496">
    <property type="entry name" value="frr"/>
    <property type="match status" value="1"/>
</dbReference>
<dbReference type="PANTHER" id="PTHR20982:SF3">
    <property type="entry name" value="MITOCHONDRIAL RIBOSOME RECYCLING FACTOR PSEUDO 1"/>
    <property type="match status" value="1"/>
</dbReference>
<dbReference type="PANTHER" id="PTHR20982">
    <property type="entry name" value="RIBOSOME RECYCLING FACTOR"/>
    <property type="match status" value="1"/>
</dbReference>
<dbReference type="Pfam" id="PF01765">
    <property type="entry name" value="RRF"/>
    <property type="match status" value="1"/>
</dbReference>
<dbReference type="SUPFAM" id="SSF55194">
    <property type="entry name" value="Ribosome recycling factor, RRF"/>
    <property type="match status" value="1"/>
</dbReference>
<comment type="function">
    <text evidence="1">Responsible for the release of ribosomes from messenger RNA at the termination of protein biosynthesis. May increase the efficiency of translation by recycling ribosomes from one round of translation to another.</text>
</comment>
<comment type="subcellular location">
    <subcellularLocation>
        <location evidence="1">Cytoplasm</location>
    </subcellularLocation>
</comment>
<comment type="similarity">
    <text evidence="1">Belongs to the RRF family.</text>
</comment>
<name>RRF_CHLTA</name>
<evidence type="ECO:0000255" key="1">
    <source>
        <dbReference type="HAMAP-Rule" id="MF_00040"/>
    </source>
</evidence>